<feature type="signal peptide" evidence="1">
    <location>
        <begin position="1"/>
        <end position="27"/>
    </location>
</feature>
<feature type="chain" id="PRO_0000045261" description="Soluble lytic murein transglycosylase">
    <location>
        <begin position="28"/>
        <end position="645"/>
    </location>
</feature>
<feature type="region of interest" description="Slt-type domain">
    <location>
        <begin position="492"/>
        <end position="582"/>
    </location>
</feature>
<feature type="active site" evidence="2">
    <location>
        <position position="505"/>
    </location>
</feature>
<feature type="disulfide bond" evidence="1">
    <location>
        <begin position="133"/>
        <end position="166"/>
    </location>
</feature>
<protein>
    <recommendedName>
        <fullName>Soluble lytic murein transglycosylase</fullName>
        <ecNumber>4.2.2.n1</ecNumber>
    </recommendedName>
    <alternativeName>
        <fullName>Exomuramidase</fullName>
    </alternativeName>
    <alternativeName>
        <fullName>Peptidoglycan lytic exotransglycosylase</fullName>
    </alternativeName>
    <alternativeName>
        <fullName>Slt70</fullName>
    </alternativeName>
</protein>
<dbReference type="EC" id="4.2.2.n1"/>
<dbReference type="EMBL" id="AE005174">
    <property type="protein sequence ID" value="AAG59572.1"/>
    <property type="status" value="ALT_INIT"/>
    <property type="molecule type" value="Genomic_DNA"/>
</dbReference>
<dbReference type="EMBL" id="BA000007">
    <property type="protein sequence ID" value="BAB38773.2"/>
    <property type="molecule type" value="Genomic_DNA"/>
</dbReference>
<dbReference type="PIR" id="F91297">
    <property type="entry name" value="F91297"/>
</dbReference>
<dbReference type="PIR" id="H86138">
    <property type="entry name" value="H86138"/>
</dbReference>
<dbReference type="RefSeq" id="NP_313377.2">
    <property type="nucleotide sequence ID" value="NC_002695.1"/>
</dbReference>
<dbReference type="SMR" id="P0AGC4"/>
<dbReference type="STRING" id="155864.Z5994"/>
<dbReference type="GeneID" id="913492"/>
<dbReference type="KEGG" id="ece:Z5994"/>
<dbReference type="KEGG" id="ecs:ECs_5350"/>
<dbReference type="PATRIC" id="fig|386585.9.peg.5598"/>
<dbReference type="eggNOG" id="COG0741">
    <property type="taxonomic scope" value="Bacteria"/>
</dbReference>
<dbReference type="HOGENOM" id="CLU_019016_1_1_6"/>
<dbReference type="OMA" id="RQESAFM"/>
<dbReference type="Proteomes" id="UP000000558">
    <property type="component" value="Chromosome"/>
</dbReference>
<dbReference type="Proteomes" id="UP000002519">
    <property type="component" value="Chromosome"/>
</dbReference>
<dbReference type="GO" id="GO:0016020">
    <property type="term" value="C:membrane"/>
    <property type="evidence" value="ECO:0007669"/>
    <property type="project" value="InterPro"/>
</dbReference>
<dbReference type="GO" id="GO:0042597">
    <property type="term" value="C:periplasmic space"/>
    <property type="evidence" value="ECO:0007669"/>
    <property type="project" value="UniProtKB-SubCell"/>
</dbReference>
<dbReference type="GO" id="GO:0004553">
    <property type="term" value="F:hydrolase activity, hydrolyzing O-glycosyl compounds"/>
    <property type="evidence" value="ECO:0007669"/>
    <property type="project" value="InterPro"/>
</dbReference>
<dbReference type="GO" id="GO:0008933">
    <property type="term" value="F:peptidoglycan lytic transglycosylase activity"/>
    <property type="evidence" value="ECO:0007669"/>
    <property type="project" value="InterPro"/>
</dbReference>
<dbReference type="GO" id="GO:0071555">
    <property type="term" value="P:cell wall organization"/>
    <property type="evidence" value="ECO:0007669"/>
    <property type="project" value="UniProtKB-KW"/>
</dbReference>
<dbReference type="GO" id="GO:0000270">
    <property type="term" value="P:peptidoglycan metabolic process"/>
    <property type="evidence" value="ECO:0007669"/>
    <property type="project" value="InterPro"/>
</dbReference>
<dbReference type="CDD" id="cd13401">
    <property type="entry name" value="Slt70-like"/>
    <property type="match status" value="1"/>
</dbReference>
<dbReference type="FunFam" id="1.10.530.10:FF:000011">
    <property type="entry name" value="Soluble lytic murein transglycosylase"/>
    <property type="match status" value="1"/>
</dbReference>
<dbReference type="FunFam" id="1.25.20.10:FF:000001">
    <property type="entry name" value="Soluble lytic murein transglycosylase"/>
    <property type="match status" value="1"/>
</dbReference>
<dbReference type="Gene3D" id="1.10.530.10">
    <property type="match status" value="1"/>
</dbReference>
<dbReference type="Gene3D" id="1.25.20.10">
    <property type="entry name" value="Bacterial muramidases"/>
    <property type="match status" value="1"/>
</dbReference>
<dbReference type="Gene3D" id="1.10.1240.20">
    <property type="entry name" value="Lytic transglycosylase, superhelical linker domain"/>
    <property type="match status" value="1"/>
</dbReference>
<dbReference type="InterPro" id="IPR023346">
    <property type="entry name" value="Lysozyme-like_dom_sf"/>
</dbReference>
<dbReference type="InterPro" id="IPR037061">
    <property type="entry name" value="Lytic_TGlycoase_superhlx_L_sf"/>
</dbReference>
<dbReference type="InterPro" id="IPR012289">
    <property type="entry name" value="Lytic_TGlycosylase_superhlx_L"/>
</dbReference>
<dbReference type="InterPro" id="IPR008939">
    <property type="entry name" value="Lytic_TGlycosylase_superhlx_U"/>
</dbReference>
<dbReference type="InterPro" id="IPR000189">
    <property type="entry name" value="Transglyc_AS"/>
</dbReference>
<dbReference type="InterPro" id="IPR008258">
    <property type="entry name" value="Transglycosylase_SLT_dom_1"/>
</dbReference>
<dbReference type="NCBIfam" id="NF008631">
    <property type="entry name" value="PRK11619.1"/>
    <property type="match status" value="1"/>
</dbReference>
<dbReference type="PANTHER" id="PTHR37423:SF5">
    <property type="entry name" value="SOLUBLE LYTIC MUREIN TRANSGLYCOSYLASE"/>
    <property type="match status" value="1"/>
</dbReference>
<dbReference type="PANTHER" id="PTHR37423">
    <property type="entry name" value="SOLUBLE LYTIC MUREIN TRANSGLYCOSYLASE-RELATED"/>
    <property type="match status" value="1"/>
</dbReference>
<dbReference type="Pfam" id="PF01464">
    <property type="entry name" value="SLT"/>
    <property type="match status" value="1"/>
</dbReference>
<dbReference type="Pfam" id="PF14718">
    <property type="entry name" value="SLT_L"/>
    <property type="match status" value="1"/>
</dbReference>
<dbReference type="SUPFAM" id="SSF48435">
    <property type="entry name" value="Bacterial muramidases"/>
    <property type="match status" value="1"/>
</dbReference>
<dbReference type="SUPFAM" id="SSF53955">
    <property type="entry name" value="Lysozyme-like"/>
    <property type="match status" value="1"/>
</dbReference>
<dbReference type="PROSITE" id="PS00922">
    <property type="entry name" value="TRANSGLYCOSYLASE"/>
    <property type="match status" value="1"/>
</dbReference>
<keyword id="KW-0961">Cell wall biogenesis/degradation</keyword>
<keyword id="KW-1015">Disulfide bond</keyword>
<keyword id="KW-0456">Lyase</keyword>
<keyword id="KW-0574">Periplasm</keyword>
<keyword id="KW-1185">Reference proteome</keyword>
<keyword id="KW-0732">Signal</keyword>
<organism>
    <name type="scientific">Escherichia coli O157:H7</name>
    <dbReference type="NCBI Taxonomy" id="83334"/>
    <lineage>
        <taxon>Bacteria</taxon>
        <taxon>Pseudomonadati</taxon>
        <taxon>Pseudomonadota</taxon>
        <taxon>Gammaproteobacteria</taxon>
        <taxon>Enterobacterales</taxon>
        <taxon>Enterobacteriaceae</taxon>
        <taxon>Escherichia</taxon>
    </lineage>
</organism>
<reference key="1">
    <citation type="journal article" date="2001" name="Nature">
        <title>Genome sequence of enterohaemorrhagic Escherichia coli O157:H7.</title>
        <authorList>
            <person name="Perna N.T."/>
            <person name="Plunkett G. III"/>
            <person name="Burland V."/>
            <person name="Mau B."/>
            <person name="Glasner J.D."/>
            <person name="Rose D.J."/>
            <person name="Mayhew G.F."/>
            <person name="Evans P.S."/>
            <person name="Gregor J."/>
            <person name="Kirkpatrick H.A."/>
            <person name="Posfai G."/>
            <person name="Hackett J."/>
            <person name="Klink S."/>
            <person name="Boutin A."/>
            <person name="Shao Y."/>
            <person name="Miller L."/>
            <person name="Grotbeck E.J."/>
            <person name="Davis N.W."/>
            <person name="Lim A."/>
            <person name="Dimalanta E.T."/>
            <person name="Potamousis K."/>
            <person name="Apodaca J."/>
            <person name="Anantharaman T.S."/>
            <person name="Lin J."/>
            <person name="Yen G."/>
            <person name="Schwartz D.C."/>
            <person name="Welch R.A."/>
            <person name="Blattner F.R."/>
        </authorList>
    </citation>
    <scope>NUCLEOTIDE SEQUENCE [LARGE SCALE GENOMIC DNA]</scope>
    <source>
        <strain>O157:H7 / EDL933 / ATCC 700927 / EHEC</strain>
    </source>
</reference>
<reference key="2">
    <citation type="journal article" date="2001" name="DNA Res.">
        <title>Complete genome sequence of enterohemorrhagic Escherichia coli O157:H7 and genomic comparison with a laboratory strain K-12.</title>
        <authorList>
            <person name="Hayashi T."/>
            <person name="Makino K."/>
            <person name="Ohnishi M."/>
            <person name="Kurokawa K."/>
            <person name="Ishii K."/>
            <person name="Yokoyama K."/>
            <person name="Han C.-G."/>
            <person name="Ohtsubo E."/>
            <person name="Nakayama K."/>
            <person name="Murata T."/>
            <person name="Tanaka M."/>
            <person name="Tobe T."/>
            <person name="Iida T."/>
            <person name="Takami H."/>
            <person name="Honda T."/>
            <person name="Sasakawa C."/>
            <person name="Ogasawara N."/>
            <person name="Yasunaga T."/>
            <person name="Kuhara S."/>
            <person name="Shiba T."/>
            <person name="Hattori M."/>
            <person name="Shinagawa H."/>
        </authorList>
    </citation>
    <scope>NUCLEOTIDE SEQUENCE [LARGE SCALE GENOMIC DNA]</scope>
    <source>
        <strain>O157:H7 / Sakai / RIMD 0509952 / EHEC</strain>
    </source>
</reference>
<sequence length="645" mass="73353">MEKAKQVTWRLLAAGVCLLTVSSVARADSLDEQRSRYAQIKQAWDNRQMDVVEQMMPGLKDYPLYPYLEYRQITDDLMNQPAVTVTNFVRANPTLPPARTLQSRFVNELARREDWRGLLAFSPEKPGTTEAQCNYYYAKWNTGQSEEAWQGAKELWLTGKSQPNACDKLFSVWRASGKQDPLAYLERIRLAMKAGNTGLVTVLAGQMPADYQTIASAIISLANNPNTVLTFARTTGATDFTRQMAAVAFASVARQDAENARLMIPSLAQAQQLNEDQIQELRDIVAWRLMGNDVTDEQAKWRDDAIMRSQSTSLIERRVRMALGTGDRRGLNTWLARLPMEAKEKDEWRYWQADLLLERGREAEAKEILHQLMQQRGFYPMVAAQRIGEEYELKIDKAPQNVDSALTQGPEMARVRELMYWNLDNTARSEWANLVKSKSKTEQAQLARYAFNNQWWDLSVQATIAGKLWDHLEERFPLAYNDLFKRYTSGKEIPQSYAMAIARQESAWNPKVKSPVGASGLMQIMPGTATHTVKMFSIPGYSSPGQLLDPETNINIGTSYLQYVYQQFGNNRIFSSAAYNAGPGRVRTWLGNSAGRIDAVAFVESIPFSETRGYVKNVLAYDAYYRYFMGDKPTLMSATEWGRRY</sequence>
<accession>P0AGC4</accession>
<accession>P03810</accession>
<accession>P76820</accession>
<accession>Q8XB18</accession>
<name>SLT_ECO57</name>
<comment type="function">
    <text evidence="1">Murein-degrading enzyme. Catalyzes the cleavage of the glycosidic bonds between N-acetylmuramic acid and N-acetylglucosamine residues in peptidoglycan. May play a role in recycling of muropeptides during cell elongation and/or cell division (By similarity).</text>
</comment>
<comment type="catalytic activity">
    <reaction>
        <text>Exolytic cleavage of the (1-&gt;4)-beta-glycosidic linkage between N-acetylmuramic acid (MurNAc) and N-acetylglucosamine (GlcNAc) residues in peptidoglycan, from either the reducing or the non-reducing ends of the peptidoglycan chains, with concomitant formation of a 1,6-anhydrobond in the MurNAc residue.</text>
        <dbReference type="EC" id="4.2.2.n1"/>
    </reaction>
</comment>
<comment type="subcellular location">
    <subcellularLocation>
        <location evidence="1">Periplasm</location>
    </subcellularLocation>
    <text evidence="1">Tightly associated with the murein sacculus.</text>
</comment>
<comment type="similarity">
    <text evidence="3">Belongs to the transglycosylase Slt family.</text>
</comment>
<comment type="sequence caution" evidence="3">
    <conflict type="erroneous initiation">
        <sequence resource="EMBL-CDS" id="AAG59572"/>
    </conflict>
    <text>Extended N-terminus.</text>
</comment>
<gene>
    <name type="primary">slt</name>
    <name type="ordered locus">Z5994</name>
    <name type="ordered locus">ECs5350</name>
</gene>
<evidence type="ECO:0000250" key="1"/>
<evidence type="ECO:0000255" key="2">
    <source>
        <dbReference type="PROSITE-ProRule" id="PRU10071"/>
    </source>
</evidence>
<evidence type="ECO:0000305" key="3"/>
<proteinExistence type="inferred from homology"/>